<proteinExistence type="inferred from homology"/>
<dbReference type="EC" id="2.5.1.7" evidence="1"/>
<dbReference type="EMBL" id="CP001096">
    <property type="protein sequence ID" value="ACF03513.1"/>
    <property type="molecule type" value="Genomic_DNA"/>
</dbReference>
<dbReference type="RefSeq" id="WP_011160065.1">
    <property type="nucleotide sequence ID" value="NC_011004.1"/>
</dbReference>
<dbReference type="SMR" id="B3QA35"/>
<dbReference type="GeneID" id="66895683"/>
<dbReference type="KEGG" id="rpt:Rpal_5024"/>
<dbReference type="HOGENOM" id="CLU_027387_0_0_5"/>
<dbReference type="OrthoDB" id="9803760at2"/>
<dbReference type="UniPathway" id="UPA00219"/>
<dbReference type="Proteomes" id="UP000001725">
    <property type="component" value="Chromosome"/>
</dbReference>
<dbReference type="GO" id="GO:0005737">
    <property type="term" value="C:cytoplasm"/>
    <property type="evidence" value="ECO:0007669"/>
    <property type="project" value="UniProtKB-SubCell"/>
</dbReference>
<dbReference type="GO" id="GO:0008760">
    <property type="term" value="F:UDP-N-acetylglucosamine 1-carboxyvinyltransferase activity"/>
    <property type="evidence" value="ECO:0007669"/>
    <property type="project" value="UniProtKB-UniRule"/>
</dbReference>
<dbReference type="GO" id="GO:0051301">
    <property type="term" value="P:cell division"/>
    <property type="evidence" value="ECO:0007669"/>
    <property type="project" value="UniProtKB-KW"/>
</dbReference>
<dbReference type="GO" id="GO:0071555">
    <property type="term" value="P:cell wall organization"/>
    <property type="evidence" value="ECO:0007669"/>
    <property type="project" value="UniProtKB-KW"/>
</dbReference>
<dbReference type="GO" id="GO:0009252">
    <property type="term" value="P:peptidoglycan biosynthetic process"/>
    <property type="evidence" value="ECO:0007669"/>
    <property type="project" value="UniProtKB-UniRule"/>
</dbReference>
<dbReference type="GO" id="GO:0008360">
    <property type="term" value="P:regulation of cell shape"/>
    <property type="evidence" value="ECO:0007669"/>
    <property type="project" value="UniProtKB-KW"/>
</dbReference>
<dbReference type="GO" id="GO:0019277">
    <property type="term" value="P:UDP-N-acetylgalactosamine biosynthetic process"/>
    <property type="evidence" value="ECO:0007669"/>
    <property type="project" value="InterPro"/>
</dbReference>
<dbReference type="CDD" id="cd01555">
    <property type="entry name" value="UdpNAET"/>
    <property type="match status" value="1"/>
</dbReference>
<dbReference type="FunFam" id="3.65.10.10:FF:000001">
    <property type="entry name" value="UDP-N-acetylglucosamine 1-carboxyvinyltransferase"/>
    <property type="match status" value="1"/>
</dbReference>
<dbReference type="Gene3D" id="3.65.10.10">
    <property type="entry name" value="Enolpyruvate transferase domain"/>
    <property type="match status" value="2"/>
</dbReference>
<dbReference type="HAMAP" id="MF_00111">
    <property type="entry name" value="MurA"/>
    <property type="match status" value="1"/>
</dbReference>
<dbReference type="InterPro" id="IPR001986">
    <property type="entry name" value="Enolpyruvate_Tfrase_dom"/>
</dbReference>
<dbReference type="InterPro" id="IPR036968">
    <property type="entry name" value="Enolpyruvate_Tfrase_sf"/>
</dbReference>
<dbReference type="InterPro" id="IPR050068">
    <property type="entry name" value="MurA_subfamily"/>
</dbReference>
<dbReference type="InterPro" id="IPR013792">
    <property type="entry name" value="RNA3'P_cycl/enolpyr_Trfase_a/b"/>
</dbReference>
<dbReference type="InterPro" id="IPR005750">
    <property type="entry name" value="UDP_GlcNAc_COvinyl_MurA"/>
</dbReference>
<dbReference type="NCBIfam" id="TIGR01072">
    <property type="entry name" value="murA"/>
    <property type="match status" value="1"/>
</dbReference>
<dbReference type="NCBIfam" id="NF006873">
    <property type="entry name" value="PRK09369.1"/>
    <property type="match status" value="1"/>
</dbReference>
<dbReference type="PANTHER" id="PTHR43783">
    <property type="entry name" value="UDP-N-ACETYLGLUCOSAMINE 1-CARBOXYVINYLTRANSFERASE"/>
    <property type="match status" value="1"/>
</dbReference>
<dbReference type="PANTHER" id="PTHR43783:SF1">
    <property type="entry name" value="UDP-N-ACETYLGLUCOSAMINE 1-CARBOXYVINYLTRANSFERASE"/>
    <property type="match status" value="1"/>
</dbReference>
<dbReference type="Pfam" id="PF00275">
    <property type="entry name" value="EPSP_synthase"/>
    <property type="match status" value="1"/>
</dbReference>
<dbReference type="SUPFAM" id="SSF55205">
    <property type="entry name" value="EPT/RTPC-like"/>
    <property type="match status" value="1"/>
</dbReference>
<sequence>MDRIKIIGGNELRGTIPISGAKNAALPLMIAALLTDETLILDNVPRLADVALLQRILGNHGVDIMAAGKRPGDHEYQGQTLHISAKTIVDTTAPYDLVSKMRASFWVIAPLVARMHEAKVSLPGGCAIGTRPVDLLIMALEKLGAEITIDGGYVIAKAPGGLKGATIAFPKVTVSGTHVAVMAAALAKGTTIIDNAACEPEIVDVADCLNKMGAKITGAGTPRITIEGVAKLHGARHTVLPDRIETGTYAMAVAMAGGEVQLSGARPELLQAALDVLTQAGATITVNNDGIKVARNGAGISPVTVTTAPFPGFPTDLQAQLMALMTRAKGASHITETIFENRFMHVQELARFGAKISLDGETATIDGVERLRGAPVMATDLRASVSLVIAALAAEGETMVNRIYHLDRGFERLEEKLSACGANIERISG</sequence>
<organism>
    <name type="scientific">Rhodopseudomonas palustris (strain TIE-1)</name>
    <dbReference type="NCBI Taxonomy" id="395960"/>
    <lineage>
        <taxon>Bacteria</taxon>
        <taxon>Pseudomonadati</taxon>
        <taxon>Pseudomonadota</taxon>
        <taxon>Alphaproteobacteria</taxon>
        <taxon>Hyphomicrobiales</taxon>
        <taxon>Nitrobacteraceae</taxon>
        <taxon>Rhodopseudomonas</taxon>
    </lineage>
</organism>
<name>MURA_RHOPT</name>
<comment type="function">
    <text evidence="1">Cell wall formation. Adds enolpyruvyl to UDP-N-acetylglucosamine.</text>
</comment>
<comment type="catalytic activity">
    <reaction evidence="1">
        <text>phosphoenolpyruvate + UDP-N-acetyl-alpha-D-glucosamine = UDP-N-acetyl-3-O-(1-carboxyvinyl)-alpha-D-glucosamine + phosphate</text>
        <dbReference type="Rhea" id="RHEA:18681"/>
        <dbReference type="ChEBI" id="CHEBI:43474"/>
        <dbReference type="ChEBI" id="CHEBI:57705"/>
        <dbReference type="ChEBI" id="CHEBI:58702"/>
        <dbReference type="ChEBI" id="CHEBI:68483"/>
        <dbReference type="EC" id="2.5.1.7"/>
    </reaction>
</comment>
<comment type="pathway">
    <text evidence="1">Cell wall biogenesis; peptidoglycan biosynthesis.</text>
</comment>
<comment type="subcellular location">
    <subcellularLocation>
        <location evidence="1">Cytoplasm</location>
    </subcellularLocation>
</comment>
<comment type="similarity">
    <text evidence="1">Belongs to the EPSP synthase family. MurA subfamily.</text>
</comment>
<accession>B3QA35</accession>
<gene>
    <name evidence="1" type="primary">murA</name>
    <name type="ordered locus">Rpal_5024</name>
</gene>
<protein>
    <recommendedName>
        <fullName evidence="1">UDP-N-acetylglucosamine 1-carboxyvinyltransferase</fullName>
        <ecNumber evidence="1">2.5.1.7</ecNumber>
    </recommendedName>
    <alternativeName>
        <fullName evidence="1">Enoylpyruvate transferase</fullName>
    </alternativeName>
    <alternativeName>
        <fullName evidence="1">UDP-N-acetylglucosamine enolpyruvyl transferase</fullName>
        <shortName evidence="1">EPT</shortName>
    </alternativeName>
</protein>
<evidence type="ECO:0000255" key="1">
    <source>
        <dbReference type="HAMAP-Rule" id="MF_00111"/>
    </source>
</evidence>
<feature type="chain" id="PRO_1000094715" description="UDP-N-acetylglucosamine 1-carboxyvinyltransferase">
    <location>
        <begin position="1"/>
        <end position="429"/>
    </location>
</feature>
<feature type="active site" description="Proton donor" evidence="1">
    <location>
        <position position="126"/>
    </location>
</feature>
<feature type="binding site" evidence="1">
    <location>
        <begin position="22"/>
        <end position="23"/>
    </location>
    <ligand>
        <name>phosphoenolpyruvate</name>
        <dbReference type="ChEBI" id="CHEBI:58702"/>
    </ligand>
</feature>
<feature type="binding site" evidence="1">
    <location>
        <position position="102"/>
    </location>
    <ligand>
        <name>UDP-N-acetyl-alpha-D-glucosamine</name>
        <dbReference type="ChEBI" id="CHEBI:57705"/>
    </ligand>
</feature>
<feature type="binding site" evidence="1">
    <location>
        <begin position="131"/>
        <end position="135"/>
    </location>
    <ligand>
        <name>UDP-N-acetyl-alpha-D-glucosamine</name>
        <dbReference type="ChEBI" id="CHEBI:57705"/>
    </ligand>
</feature>
<feature type="binding site" evidence="1">
    <location>
        <position position="316"/>
    </location>
    <ligand>
        <name>UDP-N-acetyl-alpha-D-glucosamine</name>
        <dbReference type="ChEBI" id="CHEBI:57705"/>
    </ligand>
</feature>
<feature type="binding site" evidence="1">
    <location>
        <position position="338"/>
    </location>
    <ligand>
        <name>UDP-N-acetyl-alpha-D-glucosamine</name>
        <dbReference type="ChEBI" id="CHEBI:57705"/>
    </ligand>
</feature>
<feature type="modified residue" description="2-(S-cysteinyl)pyruvic acid O-phosphothioketal" evidence="1">
    <location>
        <position position="126"/>
    </location>
</feature>
<reference key="1">
    <citation type="submission" date="2008-05" db="EMBL/GenBank/DDBJ databases">
        <title>Complete sequence of Rhodopseudomonas palustris TIE-1.</title>
        <authorList>
            <consortium name="US DOE Joint Genome Institute"/>
            <person name="Lucas S."/>
            <person name="Copeland A."/>
            <person name="Lapidus A."/>
            <person name="Glavina del Rio T."/>
            <person name="Dalin E."/>
            <person name="Tice H."/>
            <person name="Pitluck S."/>
            <person name="Chain P."/>
            <person name="Malfatti S."/>
            <person name="Shin M."/>
            <person name="Vergez L."/>
            <person name="Lang D."/>
            <person name="Schmutz J."/>
            <person name="Larimer F."/>
            <person name="Land M."/>
            <person name="Hauser L."/>
            <person name="Kyrpides N."/>
            <person name="Mikhailova N."/>
            <person name="Emerson D."/>
            <person name="Newman D.K."/>
            <person name="Roden E."/>
            <person name="Richardson P."/>
        </authorList>
    </citation>
    <scope>NUCLEOTIDE SEQUENCE [LARGE SCALE GENOMIC DNA]</scope>
    <source>
        <strain>TIE-1</strain>
    </source>
</reference>
<keyword id="KW-0131">Cell cycle</keyword>
<keyword id="KW-0132">Cell division</keyword>
<keyword id="KW-0133">Cell shape</keyword>
<keyword id="KW-0961">Cell wall biogenesis/degradation</keyword>
<keyword id="KW-0963">Cytoplasm</keyword>
<keyword id="KW-0573">Peptidoglycan synthesis</keyword>
<keyword id="KW-0670">Pyruvate</keyword>
<keyword id="KW-0808">Transferase</keyword>